<name>SYI_NITV2</name>
<sequence length="938" mass="105978">MSDYKKTLQLPETKFPMKANLTQREPEMLRKWEKDDAYGAMVRASGQQGTYVLHDGPPYANGNIHMGHALNKILKDIIVKSRNLQGFKAEYVPGWDCHGLPIELKVEHELGEKKRTMPAHAVRKRCRQYAEKYLDIQRKEFKRLGVFGAWDKPYVTMHPSYEAATARELGNFAAKGGLVRSKKPIYWCCSCQTALAEAEVEYHDHTSPSVHVRFPLRDPRVAEVLPGVDPAHAYIVIWTTTPWTLPDNMAVAVHPDFDYVVVRHGGDFHIVAEGLLEACLKAFKWDEHEVVARIGGRALEGLKATHPFYDRPSPIVLADYVTLESGTGCVHTAPGHGREDYETGLRYGLDIYSPLTDEGRYLDCVEFFAGMTIFEANPKVIEKLREVGNLLAEGRITHSYPHCWRCKKPVIFRATTQWFIAMERNDLRQKALDAIRDDVRWIPSWGQERIHNMIEFRPDWCISRQRMWGVPIVALLCEDCGEAWNDADWMRDIAERFAKHATGCDYWYETDLSDIVPAGLRCPKCGGDHWKKETDILDVWFDSGTSFAAVVEQREECGFPADLYLEGSDQHRGWFHSSLLASIGTRGVPPYRSVLTHGYVVDGDGRKMSKSVGNVVAPQEIIDKHGAEVLRLWVASVDYREDIRISEEILNRLVDAYRRIRNTCRYLLGNISDLTPETMVPFEAMDPLDRFALDLASRAHERIQDAYTEYEFHKVFHTLHNLCVTDLSAFYLDILKDRLYSSAADSHARRSAQTALYRILMLMVRDMAPVLSFTAEEVFGYVPAALRPDVISVFALPATDAPAFTLDTTSRAAWEKLLAVRSETTKAIEPLRKSGEVGHSLDTHVTLFADPSLKATLEGLGSDLRAMFIVSRLEVMDLADAPADAWTSEELPELKVTVRKAEGEKCERCWIISADLGTDAAHPTLCPRCTAVLTGTGA</sequence>
<organism>
    <name type="scientific">Nitratidesulfovibrio vulgaris (strain ATCC 29579 / DSM 644 / CCUG 34227 / NCIMB 8303 / VKM B-1760 / Hildenborough)</name>
    <name type="common">Desulfovibrio vulgaris</name>
    <dbReference type="NCBI Taxonomy" id="882"/>
    <lineage>
        <taxon>Bacteria</taxon>
        <taxon>Pseudomonadati</taxon>
        <taxon>Thermodesulfobacteriota</taxon>
        <taxon>Desulfovibrionia</taxon>
        <taxon>Desulfovibrionales</taxon>
        <taxon>Desulfovibrionaceae</taxon>
        <taxon>Nitratidesulfovibrio</taxon>
    </lineage>
</organism>
<accession>Q72AR5</accession>
<feature type="chain" id="PRO_0000098380" description="Isoleucine--tRNA ligase">
    <location>
        <begin position="1"/>
        <end position="938"/>
    </location>
</feature>
<feature type="short sequence motif" description="'HIGH' region">
    <location>
        <begin position="58"/>
        <end position="68"/>
    </location>
</feature>
<feature type="short sequence motif" description="'KMSKS' region">
    <location>
        <begin position="607"/>
        <end position="611"/>
    </location>
</feature>
<feature type="binding site" evidence="1">
    <location>
        <position position="566"/>
    </location>
    <ligand>
        <name>L-isoleucyl-5'-AMP</name>
        <dbReference type="ChEBI" id="CHEBI:178002"/>
    </ligand>
</feature>
<feature type="binding site" evidence="1">
    <location>
        <position position="610"/>
    </location>
    <ligand>
        <name>ATP</name>
        <dbReference type="ChEBI" id="CHEBI:30616"/>
    </ligand>
</feature>
<feature type="binding site" evidence="1">
    <location>
        <position position="906"/>
    </location>
    <ligand>
        <name>Zn(2+)</name>
        <dbReference type="ChEBI" id="CHEBI:29105"/>
    </ligand>
</feature>
<feature type="binding site" evidence="1">
    <location>
        <position position="909"/>
    </location>
    <ligand>
        <name>Zn(2+)</name>
        <dbReference type="ChEBI" id="CHEBI:29105"/>
    </ligand>
</feature>
<feature type="binding site" evidence="1">
    <location>
        <position position="926"/>
    </location>
    <ligand>
        <name>Zn(2+)</name>
        <dbReference type="ChEBI" id="CHEBI:29105"/>
    </ligand>
</feature>
<feature type="binding site" evidence="1">
    <location>
        <position position="929"/>
    </location>
    <ligand>
        <name>Zn(2+)</name>
        <dbReference type="ChEBI" id="CHEBI:29105"/>
    </ligand>
</feature>
<proteinExistence type="evidence at protein level"/>
<keyword id="KW-0030">Aminoacyl-tRNA synthetase</keyword>
<keyword id="KW-0067">ATP-binding</keyword>
<keyword id="KW-0963">Cytoplasm</keyword>
<keyword id="KW-0436">Ligase</keyword>
<keyword id="KW-0479">Metal-binding</keyword>
<keyword id="KW-0547">Nucleotide-binding</keyword>
<keyword id="KW-0648">Protein biosynthesis</keyword>
<keyword id="KW-1185">Reference proteome</keyword>
<keyword id="KW-0862">Zinc</keyword>
<reference key="1">
    <citation type="journal article" date="2004" name="Nat. Biotechnol.">
        <title>The genome sequence of the anaerobic, sulfate-reducing bacterium Desulfovibrio vulgaris Hildenborough.</title>
        <authorList>
            <person name="Heidelberg J.F."/>
            <person name="Seshadri R."/>
            <person name="Haveman S.A."/>
            <person name="Hemme C.L."/>
            <person name="Paulsen I.T."/>
            <person name="Kolonay J.F."/>
            <person name="Eisen J.A."/>
            <person name="Ward N.L."/>
            <person name="Methe B.A."/>
            <person name="Brinkac L.M."/>
            <person name="Daugherty S.C."/>
            <person name="DeBoy R.T."/>
            <person name="Dodson R.J."/>
            <person name="Durkin A.S."/>
            <person name="Madupu R."/>
            <person name="Nelson W.C."/>
            <person name="Sullivan S.A."/>
            <person name="Fouts D.E."/>
            <person name="Haft D.H."/>
            <person name="Selengut J."/>
            <person name="Peterson J.D."/>
            <person name="Davidsen T.M."/>
            <person name="Zafar N."/>
            <person name="Zhou L."/>
            <person name="Radune D."/>
            <person name="Dimitrov G."/>
            <person name="Hance M."/>
            <person name="Tran K."/>
            <person name="Khouri H.M."/>
            <person name="Gill J."/>
            <person name="Utterback T.R."/>
            <person name="Feldblyum T.V."/>
            <person name="Wall J.D."/>
            <person name="Voordouw G."/>
            <person name="Fraser C.M."/>
        </authorList>
    </citation>
    <scope>NUCLEOTIDE SEQUENCE [LARGE SCALE GENOMIC DNA]</scope>
    <source>
        <strain>ATCC 29579 / DSM 644 / CCUG 34227 / NCIMB 8303 / VKM B-1760 / Hildenborough</strain>
    </source>
</reference>
<dbReference type="EC" id="6.1.1.5" evidence="1"/>
<dbReference type="EMBL" id="AE017285">
    <property type="protein sequence ID" value="AAS96403.1"/>
    <property type="molecule type" value="Genomic_DNA"/>
</dbReference>
<dbReference type="RefSeq" id="WP_010939213.1">
    <property type="nucleotide sequence ID" value="NC_002937.3"/>
</dbReference>
<dbReference type="RefSeq" id="YP_011144.1">
    <property type="nucleotide sequence ID" value="NC_002937.3"/>
</dbReference>
<dbReference type="SMR" id="Q72AR5"/>
<dbReference type="IntAct" id="Q72AR5">
    <property type="interactions" value="1"/>
</dbReference>
<dbReference type="STRING" id="882.DVU_1927"/>
<dbReference type="PaxDb" id="882-DVU_1927"/>
<dbReference type="EnsemblBacteria" id="AAS96403">
    <property type="protein sequence ID" value="AAS96403"/>
    <property type="gene ID" value="DVU_1927"/>
</dbReference>
<dbReference type="KEGG" id="dvu:DVU_1927"/>
<dbReference type="PATRIC" id="fig|882.5.peg.1770"/>
<dbReference type="eggNOG" id="COG0060">
    <property type="taxonomic scope" value="Bacteria"/>
</dbReference>
<dbReference type="HOGENOM" id="CLU_001493_7_1_7"/>
<dbReference type="OrthoDB" id="9810365at2"/>
<dbReference type="PhylomeDB" id="Q72AR5"/>
<dbReference type="Proteomes" id="UP000002194">
    <property type="component" value="Chromosome"/>
</dbReference>
<dbReference type="GO" id="GO:0005829">
    <property type="term" value="C:cytosol"/>
    <property type="evidence" value="ECO:0007669"/>
    <property type="project" value="TreeGrafter"/>
</dbReference>
<dbReference type="GO" id="GO:0002161">
    <property type="term" value="F:aminoacyl-tRNA deacylase activity"/>
    <property type="evidence" value="ECO:0007669"/>
    <property type="project" value="InterPro"/>
</dbReference>
<dbReference type="GO" id="GO:0005524">
    <property type="term" value="F:ATP binding"/>
    <property type="evidence" value="ECO:0007669"/>
    <property type="project" value="UniProtKB-UniRule"/>
</dbReference>
<dbReference type="GO" id="GO:0004822">
    <property type="term" value="F:isoleucine-tRNA ligase activity"/>
    <property type="evidence" value="ECO:0007669"/>
    <property type="project" value="UniProtKB-UniRule"/>
</dbReference>
<dbReference type="GO" id="GO:0000049">
    <property type="term" value="F:tRNA binding"/>
    <property type="evidence" value="ECO:0007669"/>
    <property type="project" value="InterPro"/>
</dbReference>
<dbReference type="GO" id="GO:0008270">
    <property type="term" value="F:zinc ion binding"/>
    <property type="evidence" value="ECO:0007669"/>
    <property type="project" value="UniProtKB-UniRule"/>
</dbReference>
<dbReference type="GO" id="GO:0006428">
    <property type="term" value="P:isoleucyl-tRNA aminoacylation"/>
    <property type="evidence" value="ECO:0007669"/>
    <property type="project" value="UniProtKB-UniRule"/>
</dbReference>
<dbReference type="CDD" id="cd07960">
    <property type="entry name" value="Anticodon_Ia_Ile_BEm"/>
    <property type="match status" value="1"/>
</dbReference>
<dbReference type="CDD" id="cd00818">
    <property type="entry name" value="IleRS_core"/>
    <property type="match status" value="1"/>
</dbReference>
<dbReference type="FunFam" id="1.10.730.20:FF:000001">
    <property type="entry name" value="Isoleucine--tRNA ligase"/>
    <property type="match status" value="1"/>
</dbReference>
<dbReference type="Gene3D" id="1.10.730.20">
    <property type="match status" value="1"/>
</dbReference>
<dbReference type="Gene3D" id="3.40.50.620">
    <property type="entry name" value="HUPs"/>
    <property type="match status" value="2"/>
</dbReference>
<dbReference type="Gene3D" id="1.10.10.830">
    <property type="entry name" value="Ile-tRNA synthetase CP2 domain-like"/>
    <property type="match status" value="1"/>
</dbReference>
<dbReference type="Gene3D" id="3.90.740.10">
    <property type="entry name" value="Valyl/Leucyl/Isoleucyl-tRNA synthetase, editing domain"/>
    <property type="match status" value="1"/>
</dbReference>
<dbReference type="HAMAP" id="MF_02002">
    <property type="entry name" value="Ile_tRNA_synth_type1"/>
    <property type="match status" value="1"/>
</dbReference>
<dbReference type="InterPro" id="IPR001412">
    <property type="entry name" value="aa-tRNA-synth_I_CS"/>
</dbReference>
<dbReference type="InterPro" id="IPR002300">
    <property type="entry name" value="aa-tRNA-synth_Ia"/>
</dbReference>
<dbReference type="InterPro" id="IPR033708">
    <property type="entry name" value="Anticodon_Ile_BEm"/>
</dbReference>
<dbReference type="InterPro" id="IPR002301">
    <property type="entry name" value="Ile-tRNA-ligase"/>
</dbReference>
<dbReference type="InterPro" id="IPR023585">
    <property type="entry name" value="Ile-tRNA-ligase_type1"/>
</dbReference>
<dbReference type="InterPro" id="IPR050081">
    <property type="entry name" value="Ile-tRNA_ligase"/>
</dbReference>
<dbReference type="InterPro" id="IPR013155">
    <property type="entry name" value="M/V/L/I-tRNA-synth_anticd-bd"/>
</dbReference>
<dbReference type="InterPro" id="IPR014729">
    <property type="entry name" value="Rossmann-like_a/b/a_fold"/>
</dbReference>
<dbReference type="InterPro" id="IPR009080">
    <property type="entry name" value="tRNAsynth_Ia_anticodon-bd"/>
</dbReference>
<dbReference type="InterPro" id="IPR009008">
    <property type="entry name" value="Val/Leu/Ile-tRNA-synth_edit"/>
</dbReference>
<dbReference type="InterPro" id="IPR010663">
    <property type="entry name" value="Znf_FPG/IleRS"/>
</dbReference>
<dbReference type="NCBIfam" id="TIGR00392">
    <property type="entry name" value="ileS"/>
    <property type="match status" value="1"/>
</dbReference>
<dbReference type="PANTHER" id="PTHR42765:SF1">
    <property type="entry name" value="ISOLEUCINE--TRNA LIGASE, MITOCHONDRIAL"/>
    <property type="match status" value="1"/>
</dbReference>
<dbReference type="PANTHER" id="PTHR42765">
    <property type="entry name" value="SOLEUCYL-TRNA SYNTHETASE"/>
    <property type="match status" value="1"/>
</dbReference>
<dbReference type="Pfam" id="PF08264">
    <property type="entry name" value="Anticodon_1"/>
    <property type="match status" value="1"/>
</dbReference>
<dbReference type="Pfam" id="PF00133">
    <property type="entry name" value="tRNA-synt_1"/>
    <property type="match status" value="1"/>
</dbReference>
<dbReference type="Pfam" id="PF06827">
    <property type="entry name" value="zf-FPG_IleRS"/>
    <property type="match status" value="1"/>
</dbReference>
<dbReference type="PRINTS" id="PR00984">
    <property type="entry name" value="TRNASYNTHILE"/>
</dbReference>
<dbReference type="SUPFAM" id="SSF47323">
    <property type="entry name" value="Anticodon-binding domain of a subclass of class I aminoacyl-tRNA synthetases"/>
    <property type="match status" value="1"/>
</dbReference>
<dbReference type="SUPFAM" id="SSF52374">
    <property type="entry name" value="Nucleotidylyl transferase"/>
    <property type="match status" value="1"/>
</dbReference>
<dbReference type="SUPFAM" id="SSF50677">
    <property type="entry name" value="ValRS/IleRS/LeuRS editing domain"/>
    <property type="match status" value="1"/>
</dbReference>
<dbReference type="PROSITE" id="PS00178">
    <property type="entry name" value="AA_TRNA_LIGASE_I"/>
    <property type="match status" value="1"/>
</dbReference>
<comment type="function">
    <text evidence="1">Catalyzes the attachment of isoleucine to tRNA(Ile). As IleRS can inadvertently accommodate and process structurally similar amino acids such as valine, to avoid such errors it has two additional distinct tRNA(Ile)-dependent editing activities. One activity is designated as 'pretransfer' editing and involves the hydrolysis of activated Val-AMP. The other activity is designated 'posttransfer' editing and involves deacylation of mischarged Val-tRNA(Ile).</text>
</comment>
<comment type="catalytic activity">
    <reaction evidence="1">
        <text>tRNA(Ile) + L-isoleucine + ATP = L-isoleucyl-tRNA(Ile) + AMP + diphosphate</text>
        <dbReference type="Rhea" id="RHEA:11060"/>
        <dbReference type="Rhea" id="RHEA-COMP:9666"/>
        <dbReference type="Rhea" id="RHEA-COMP:9695"/>
        <dbReference type="ChEBI" id="CHEBI:30616"/>
        <dbReference type="ChEBI" id="CHEBI:33019"/>
        <dbReference type="ChEBI" id="CHEBI:58045"/>
        <dbReference type="ChEBI" id="CHEBI:78442"/>
        <dbReference type="ChEBI" id="CHEBI:78528"/>
        <dbReference type="ChEBI" id="CHEBI:456215"/>
        <dbReference type="EC" id="6.1.1.5"/>
    </reaction>
</comment>
<comment type="cofactor">
    <cofactor evidence="1">
        <name>Zn(2+)</name>
        <dbReference type="ChEBI" id="CHEBI:29105"/>
    </cofactor>
    <text evidence="1">Binds 1 zinc ion per subunit.</text>
</comment>
<comment type="subunit">
    <text evidence="1">Monomer.</text>
</comment>
<comment type="interaction">
    <interactant intactId="EBI-10068062">
        <id>Q72AR5</id>
    </interactant>
    <interactant intactId="EBI-10068066">
        <id>Q72BM3</id>
        <label>DVU_1612</label>
    </interactant>
    <organismsDiffer>false</organismsDiffer>
    <experiments>2</experiments>
</comment>
<comment type="subcellular location">
    <subcellularLocation>
        <location evidence="1">Cytoplasm</location>
    </subcellularLocation>
</comment>
<comment type="domain">
    <text evidence="1">IleRS has two distinct active sites: one for aminoacylation and one for editing. The misactivated valine is translocated from the active site to the editing site, which sterically excludes the correctly activated isoleucine. The single editing site contains two valyl binding pockets, one specific for each substrate (Val-AMP or Val-tRNA(Ile)).</text>
</comment>
<comment type="similarity">
    <text evidence="1">Belongs to the class-I aminoacyl-tRNA synthetase family. IleS type 1 subfamily.</text>
</comment>
<protein>
    <recommendedName>
        <fullName evidence="1">Isoleucine--tRNA ligase</fullName>
        <ecNumber evidence="1">6.1.1.5</ecNumber>
    </recommendedName>
    <alternativeName>
        <fullName evidence="1">Isoleucyl-tRNA synthetase</fullName>
        <shortName evidence="1">IleRS</shortName>
    </alternativeName>
</protein>
<evidence type="ECO:0000255" key="1">
    <source>
        <dbReference type="HAMAP-Rule" id="MF_02002"/>
    </source>
</evidence>
<gene>
    <name evidence="1" type="primary">ileS</name>
    <name type="ordered locus">DVU_1927</name>
</gene>